<keyword id="KW-0963">Cytoplasm</keyword>
<keyword id="KW-0648">Protein biosynthesis</keyword>
<accession>C1CK29</accession>
<organism>
    <name type="scientific">Streptococcus pneumoniae (strain P1031)</name>
    <dbReference type="NCBI Taxonomy" id="488223"/>
    <lineage>
        <taxon>Bacteria</taxon>
        <taxon>Bacillati</taxon>
        <taxon>Bacillota</taxon>
        <taxon>Bacilli</taxon>
        <taxon>Lactobacillales</taxon>
        <taxon>Streptococcaceae</taxon>
        <taxon>Streptococcus</taxon>
    </lineage>
</organism>
<reference key="1">
    <citation type="journal article" date="2010" name="Genome Biol.">
        <title>Structure and dynamics of the pan-genome of Streptococcus pneumoniae and closely related species.</title>
        <authorList>
            <person name="Donati C."/>
            <person name="Hiller N.L."/>
            <person name="Tettelin H."/>
            <person name="Muzzi A."/>
            <person name="Croucher N.J."/>
            <person name="Angiuoli S.V."/>
            <person name="Oggioni M."/>
            <person name="Dunning Hotopp J.C."/>
            <person name="Hu F.Z."/>
            <person name="Riley D.R."/>
            <person name="Covacci A."/>
            <person name="Mitchell T.J."/>
            <person name="Bentley S.D."/>
            <person name="Kilian M."/>
            <person name="Ehrlich G.D."/>
            <person name="Rappuoli R."/>
            <person name="Moxon E.R."/>
            <person name="Masignani V."/>
        </authorList>
    </citation>
    <scope>NUCLEOTIDE SEQUENCE [LARGE SCALE GENOMIC DNA]</scope>
    <source>
        <strain>P1031</strain>
    </source>
</reference>
<dbReference type="EMBL" id="CP000920">
    <property type="protein sequence ID" value="ACO21537.1"/>
    <property type="molecule type" value="Genomic_DNA"/>
</dbReference>
<dbReference type="RefSeq" id="WP_001262222.1">
    <property type="nucleotide sequence ID" value="NC_012467.1"/>
</dbReference>
<dbReference type="SMR" id="C1CK29"/>
<dbReference type="KEGG" id="spp:SPP_0952"/>
<dbReference type="HOGENOM" id="CLU_073981_2_0_9"/>
<dbReference type="GO" id="GO:0005737">
    <property type="term" value="C:cytoplasm"/>
    <property type="evidence" value="ECO:0007669"/>
    <property type="project" value="UniProtKB-SubCell"/>
</dbReference>
<dbReference type="GO" id="GO:0043023">
    <property type="term" value="F:ribosomal large subunit binding"/>
    <property type="evidence" value="ECO:0007669"/>
    <property type="project" value="TreeGrafter"/>
</dbReference>
<dbReference type="GO" id="GO:0006415">
    <property type="term" value="P:translational termination"/>
    <property type="evidence" value="ECO:0007669"/>
    <property type="project" value="UniProtKB-UniRule"/>
</dbReference>
<dbReference type="CDD" id="cd00520">
    <property type="entry name" value="RRF"/>
    <property type="match status" value="1"/>
</dbReference>
<dbReference type="FunFam" id="1.10.132.20:FF:000001">
    <property type="entry name" value="Ribosome-recycling factor"/>
    <property type="match status" value="1"/>
</dbReference>
<dbReference type="FunFam" id="3.30.1360.40:FF:000001">
    <property type="entry name" value="Ribosome-recycling factor"/>
    <property type="match status" value="1"/>
</dbReference>
<dbReference type="Gene3D" id="3.30.1360.40">
    <property type="match status" value="1"/>
</dbReference>
<dbReference type="Gene3D" id="1.10.132.20">
    <property type="entry name" value="Ribosome-recycling factor"/>
    <property type="match status" value="1"/>
</dbReference>
<dbReference type="HAMAP" id="MF_00040">
    <property type="entry name" value="RRF"/>
    <property type="match status" value="1"/>
</dbReference>
<dbReference type="InterPro" id="IPR002661">
    <property type="entry name" value="Ribosome_recyc_fac"/>
</dbReference>
<dbReference type="InterPro" id="IPR023584">
    <property type="entry name" value="Ribosome_recyc_fac_dom"/>
</dbReference>
<dbReference type="InterPro" id="IPR036191">
    <property type="entry name" value="RRF_sf"/>
</dbReference>
<dbReference type="NCBIfam" id="TIGR00496">
    <property type="entry name" value="frr"/>
    <property type="match status" value="1"/>
</dbReference>
<dbReference type="PANTHER" id="PTHR20982:SF3">
    <property type="entry name" value="MITOCHONDRIAL RIBOSOME RECYCLING FACTOR PSEUDO 1"/>
    <property type="match status" value="1"/>
</dbReference>
<dbReference type="PANTHER" id="PTHR20982">
    <property type="entry name" value="RIBOSOME RECYCLING FACTOR"/>
    <property type="match status" value="1"/>
</dbReference>
<dbReference type="Pfam" id="PF01765">
    <property type="entry name" value="RRF"/>
    <property type="match status" value="1"/>
</dbReference>
<dbReference type="SUPFAM" id="SSF55194">
    <property type="entry name" value="Ribosome recycling factor, RRF"/>
    <property type="match status" value="1"/>
</dbReference>
<sequence length="185" mass="20629">MANAIIEKAKERMTQSHQSLAREFGGIRAGRANASLLDRIHVEYYGVETPLNQIASITIPEARVLLVTPFDKSSLKDIERALNASDLGNTPANDGSVIRLVVPALTEETRRDLAKEVKKVGENAKVAVRNIRRDAMDEAKKQEKAKEITEDELKTLEKDIQKVTDDAVKHIDDMTANKEKELLEV</sequence>
<protein>
    <recommendedName>
        <fullName evidence="1">Ribosome-recycling factor</fullName>
        <shortName evidence="1">RRF</shortName>
    </recommendedName>
    <alternativeName>
        <fullName evidence="1">Ribosome-releasing factor</fullName>
    </alternativeName>
</protein>
<evidence type="ECO:0000255" key="1">
    <source>
        <dbReference type="HAMAP-Rule" id="MF_00040"/>
    </source>
</evidence>
<name>RRF_STRZP</name>
<comment type="function">
    <text evidence="1">Responsible for the release of ribosomes from messenger RNA at the termination of protein biosynthesis. May increase the efficiency of translation by recycling ribosomes from one round of translation to another.</text>
</comment>
<comment type="subcellular location">
    <subcellularLocation>
        <location evidence="1">Cytoplasm</location>
    </subcellularLocation>
</comment>
<comment type="similarity">
    <text evidence="1">Belongs to the RRF family.</text>
</comment>
<proteinExistence type="inferred from homology"/>
<gene>
    <name evidence="1" type="primary">frr</name>
    <name type="ordered locus">SPP_0952</name>
</gene>
<feature type="chain" id="PRO_1000194957" description="Ribosome-recycling factor">
    <location>
        <begin position="1"/>
        <end position="185"/>
    </location>
</feature>